<accession>Q9I7C5</accession>
<name>DNAA_PSEAE</name>
<organism>
    <name type="scientific">Pseudomonas aeruginosa (strain ATCC 15692 / DSM 22644 / CIP 104116 / JCM 14847 / LMG 12228 / 1C / PRS 101 / PAO1)</name>
    <dbReference type="NCBI Taxonomy" id="208964"/>
    <lineage>
        <taxon>Bacteria</taxon>
        <taxon>Pseudomonadati</taxon>
        <taxon>Pseudomonadota</taxon>
        <taxon>Gammaproteobacteria</taxon>
        <taxon>Pseudomonadales</taxon>
        <taxon>Pseudomonadaceae</taxon>
        <taxon>Pseudomonas</taxon>
    </lineage>
</organism>
<evidence type="ECO:0000255" key="1">
    <source>
        <dbReference type="HAMAP-Rule" id="MF_00377"/>
    </source>
</evidence>
<evidence type="ECO:0000269" key="2">
    <source>
    </source>
</evidence>
<evidence type="ECO:0000305" key="3"/>
<protein>
    <recommendedName>
        <fullName evidence="1">Chromosomal replication initiator protein DnaA</fullName>
    </recommendedName>
</protein>
<gene>
    <name evidence="1" type="primary">dnaA</name>
    <name type="ordered locus">PA0001</name>
</gene>
<sequence>MSVELWQQCVDLLRDELPSQQFNTWIRPLQVEAEGDELRVYAPNRFVLDWVNEKYLGRLLELLGERGEGQLPALSLLIGSKRSRTPRAAIVPSQTHVAPPPPVAPPPAPVQPVSAAPVVVPREELPPVTTAPSVSSDPYEPEEPSIDPLAAAMPAGAAPAVRTERNVQVEGALKHTSYLNRTFTFENFVEGKSNQLARAAAWQVADNLKHGYNPLFLYGGVGLGKTHLMHAVGNHLLKKNPNAKVVYLHSERFVADMVKALQLNAINEFKRFYRSVDALLIDDIQFFARKERSQEEFFHTFNALLEGGQQVILTSDRYPKEIEGLEERLKSRFGWGLTVAVEPPELETRVAILMKKAEQAKIELPHDAAFFIAQRIRSNVRELEGALKRVIAHSHFMGRPITIELIRESLKDLLALQDKLVSIDNIQRTVAEYYKIKISDLLSKRRSRSVARPRQVAMALSKELTNHSLPEIGVAFGGRDHTTVLHACRKIAQLRESDADIREDYKNLLRTLTT</sequence>
<feature type="chain" id="PRO_0000114238" description="Chromosomal replication initiator protein DnaA">
    <location>
        <begin position="1"/>
        <end position="514"/>
    </location>
</feature>
<feature type="region of interest" description="Domain I, interacts with DnaA modulators" evidence="1">
    <location>
        <begin position="1"/>
        <end position="90"/>
    </location>
</feature>
<feature type="region of interest" description="Domain II" evidence="1">
    <location>
        <begin position="91"/>
        <end position="177"/>
    </location>
</feature>
<feature type="region of interest" description="Domain III, AAA+ region" evidence="1">
    <location>
        <begin position="178"/>
        <end position="394"/>
    </location>
</feature>
<feature type="region of interest" description="Domain IV, binds dsDNA" evidence="1">
    <location>
        <begin position="395"/>
        <end position="514"/>
    </location>
</feature>
<feature type="binding site" evidence="1">
    <location>
        <position position="222"/>
    </location>
    <ligand>
        <name>ATP</name>
        <dbReference type="ChEBI" id="CHEBI:30616"/>
    </ligand>
</feature>
<feature type="binding site" evidence="1">
    <location>
        <position position="224"/>
    </location>
    <ligand>
        <name>ATP</name>
        <dbReference type="ChEBI" id="CHEBI:30616"/>
    </ligand>
</feature>
<feature type="binding site" evidence="1">
    <location>
        <position position="225"/>
    </location>
    <ligand>
        <name>ATP</name>
        <dbReference type="ChEBI" id="CHEBI:30616"/>
    </ligand>
</feature>
<feature type="binding site" evidence="1">
    <location>
        <position position="226"/>
    </location>
    <ligand>
        <name>ATP</name>
        <dbReference type="ChEBI" id="CHEBI:30616"/>
    </ligand>
</feature>
<proteinExistence type="evidence at protein level"/>
<keyword id="KW-0067">ATP-binding</keyword>
<keyword id="KW-0963">Cytoplasm</keyword>
<keyword id="KW-0235">DNA replication</keyword>
<keyword id="KW-0238">DNA-binding</keyword>
<keyword id="KW-0446">Lipid-binding</keyword>
<keyword id="KW-0547">Nucleotide-binding</keyword>
<keyword id="KW-1185">Reference proteome</keyword>
<comment type="function">
    <text evidence="1">Plays an essential role in the initiation and regulation of chromosomal replication. ATP-DnaA binds to the origin of replication (oriC) to initiate formation of the DNA replication initiation complex once per cell cycle. Binds the DnaA box (a 9 base pair repeat at the origin) and separates the double-stranded (ds)DNA. Forms a right-handed helical filament on oriC DNA; dsDNA binds to the exterior of the filament while single-stranded (ss)DNA is stabiized in the filament's interior. The ATP-DnaA-oriC complex binds and stabilizes one strand of the AT-rich DNA unwinding element (DUE), permitting loading of DNA polymerase. After initiation quickly degrades to an ADP-DnaA complex that is not apt for DNA replication. Binds acidic phospholipids.</text>
</comment>
<comment type="function">
    <text evidence="2">Non-cooperatively binds DnaA boxes in the plasmid RK2 replication origin (oriV). In vitro in the presence of plasmid RK2-derived TrfA and E.coli protein HU, forms an open complex at oriV. This complex was not however competent for formation of a pre-priming complex with E.coli DnaB and DnaC. Broad host range plasmid RK2 requires not only DnaA for replication but also TrfA and host factors.</text>
</comment>
<comment type="subunit">
    <text evidence="1">Oligomerizes as a right-handed, spiral filament on DNA at oriC.</text>
</comment>
<comment type="subcellular location">
    <subcellularLocation>
        <location evidence="1">Cytoplasm</location>
    </subcellularLocation>
</comment>
<comment type="domain">
    <text evidence="1">Domain I is involved in oligomerization and binding regulators, domain II is flexibile and of varying length in different bacteria, domain III forms the AAA+ region, while domain IV binds dsDNA.</text>
</comment>
<comment type="similarity">
    <text evidence="1 3">Belongs to the DnaA family.</text>
</comment>
<reference key="1">
    <citation type="journal article" date="2000" name="J. Biol. Chem.">
        <title>Interactions of DnaA proteins from distantly related bacteria with the replication origin of the broad host range plasmid RK2.</title>
        <authorList>
            <person name="Caspi R."/>
            <person name="Helinski D.R."/>
            <person name="Pacek M."/>
            <person name="Konieczny I."/>
        </authorList>
    </citation>
    <scope>NUCLEOTIDE SEQUENCE [GENOMIC DNA]</scope>
    <scope>FUNCTION IN PLASMID DNA REPLICATION</scope>
    <scope>DNA-BINDING TO ORIV</scope>
    <source>
        <strain>PAO1 / PAO116</strain>
    </source>
</reference>
<reference key="2">
    <citation type="journal article" date="2000" name="Nature">
        <title>Complete genome sequence of Pseudomonas aeruginosa PAO1, an opportunistic pathogen.</title>
        <authorList>
            <person name="Stover C.K."/>
            <person name="Pham X.-Q.T."/>
            <person name="Erwin A.L."/>
            <person name="Mizoguchi S.D."/>
            <person name="Warrener P."/>
            <person name="Hickey M.J."/>
            <person name="Brinkman F.S.L."/>
            <person name="Hufnagle W.O."/>
            <person name="Kowalik D.J."/>
            <person name="Lagrou M."/>
            <person name="Garber R.L."/>
            <person name="Goltry L."/>
            <person name="Tolentino E."/>
            <person name="Westbrock-Wadman S."/>
            <person name="Yuan Y."/>
            <person name="Brody L.L."/>
            <person name="Coulter S.N."/>
            <person name="Folger K.R."/>
            <person name="Kas A."/>
            <person name="Larbig K."/>
            <person name="Lim R.M."/>
            <person name="Smith K.A."/>
            <person name="Spencer D.H."/>
            <person name="Wong G.K.-S."/>
            <person name="Wu Z."/>
            <person name="Paulsen I.T."/>
            <person name="Reizer J."/>
            <person name="Saier M.H. Jr."/>
            <person name="Hancock R.E.W."/>
            <person name="Lory S."/>
            <person name="Olson M.V."/>
        </authorList>
    </citation>
    <scope>NUCLEOTIDE SEQUENCE [LARGE SCALE GENOMIC DNA]</scope>
    <source>
        <strain>ATCC 15692 / DSM 22644 / CIP 104116 / JCM 14847 / LMG 12228 / 1C / PRS 101 / PAO1</strain>
    </source>
</reference>
<dbReference type="EMBL" id="AF229442">
    <property type="protein sequence ID" value="AAG28797.1"/>
    <property type="molecule type" value="Genomic_DNA"/>
</dbReference>
<dbReference type="EMBL" id="AE004091">
    <property type="protein sequence ID" value="AAG03391.1"/>
    <property type="molecule type" value="Genomic_DNA"/>
</dbReference>
<dbReference type="PIR" id="E83644">
    <property type="entry name" value="E83644"/>
</dbReference>
<dbReference type="RefSeq" id="NP_064721.1">
    <property type="nucleotide sequence ID" value="NC_002516.2"/>
</dbReference>
<dbReference type="RefSeq" id="WP_003109151.1">
    <property type="nucleotide sequence ID" value="NZ_QZGE01000012.1"/>
</dbReference>
<dbReference type="SMR" id="Q9I7C5"/>
<dbReference type="FunCoup" id="Q9I7C5">
    <property type="interactions" value="398"/>
</dbReference>
<dbReference type="STRING" id="208964.PA0001"/>
<dbReference type="PaxDb" id="208964-PA0001"/>
<dbReference type="GeneID" id="878417"/>
<dbReference type="KEGG" id="pae:PA0001"/>
<dbReference type="PATRIC" id="fig|208964.12.peg.1"/>
<dbReference type="PseudoCAP" id="PA0001"/>
<dbReference type="HOGENOM" id="CLU_026910_0_1_6"/>
<dbReference type="InParanoid" id="Q9I7C5"/>
<dbReference type="OrthoDB" id="9807019at2"/>
<dbReference type="PhylomeDB" id="Q9I7C5"/>
<dbReference type="BioCyc" id="PAER208964:G1FZ6-1-MONOMER"/>
<dbReference type="Proteomes" id="UP000002438">
    <property type="component" value="Chromosome"/>
</dbReference>
<dbReference type="GO" id="GO:0005737">
    <property type="term" value="C:cytoplasm"/>
    <property type="evidence" value="ECO:0007669"/>
    <property type="project" value="UniProtKB-SubCell"/>
</dbReference>
<dbReference type="GO" id="GO:0005886">
    <property type="term" value="C:plasma membrane"/>
    <property type="evidence" value="ECO:0000318"/>
    <property type="project" value="GO_Central"/>
</dbReference>
<dbReference type="GO" id="GO:0005524">
    <property type="term" value="F:ATP binding"/>
    <property type="evidence" value="ECO:0007669"/>
    <property type="project" value="UniProtKB-UniRule"/>
</dbReference>
<dbReference type="GO" id="GO:0016887">
    <property type="term" value="F:ATP hydrolysis activity"/>
    <property type="evidence" value="ECO:0007669"/>
    <property type="project" value="InterPro"/>
</dbReference>
<dbReference type="GO" id="GO:0003688">
    <property type="term" value="F:DNA replication origin binding"/>
    <property type="evidence" value="ECO:0000318"/>
    <property type="project" value="GO_Central"/>
</dbReference>
<dbReference type="GO" id="GO:0008289">
    <property type="term" value="F:lipid binding"/>
    <property type="evidence" value="ECO:0007669"/>
    <property type="project" value="UniProtKB-KW"/>
</dbReference>
<dbReference type="GO" id="GO:0006260">
    <property type="term" value="P:DNA replication"/>
    <property type="evidence" value="ECO:0000318"/>
    <property type="project" value="GO_Central"/>
</dbReference>
<dbReference type="GO" id="GO:0006270">
    <property type="term" value="P:DNA replication initiation"/>
    <property type="evidence" value="ECO:0000318"/>
    <property type="project" value="GO_Central"/>
</dbReference>
<dbReference type="GO" id="GO:0006275">
    <property type="term" value="P:regulation of DNA replication"/>
    <property type="evidence" value="ECO:0007669"/>
    <property type="project" value="UniProtKB-UniRule"/>
</dbReference>
<dbReference type="CDD" id="cd00009">
    <property type="entry name" value="AAA"/>
    <property type="match status" value="1"/>
</dbReference>
<dbReference type="CDD" id="cd06571">
    <property type="entry name" value="Bac_DnaA_C"/>
    <property type="match status" value="1"/>
</dbReference>
<dbReference type="FunFam" id="1.10.1750.10:FF:000001">
    <property type="entry name" value="Chromosomal replication initiator protein DnaA"/>
    <property type="match status" value="1"/>
</dbReference>
<dbReference type="FunFam" id="1.10.8.60:FF:000003">
    <property type="entry name" value="Chromosomal replication initiator protein DnaA"/>
    <property type="match status" value="1"/>
</dbReference>
<dbReference type="FunFam" id="3.30.300.180:FF:000001">
    <property type="entry name" value="Chromosomal replication initiator protein DnaA"/>
    <property type="match status" value="1"/>
</dbReference>
<dbReference type="FunFam" id="3.40.50.300:FF:000103">
    <property type="entry name" value="Chromosomal replication initiator protein DnaA"/>
    <property type="match status" value="1"/>
</dbReference>
<dbReference type="Gene3D" id="1.10.1750.10">
    <property type="match status" value="1"/>
</dbReference>
<dbReference type="Gene3D" id="1.10.8.60">
    <property type="match status" value="1"/>
</dbReference>
<dbReference type="Gene3D" id="3.30.300.180">
    <property type="match status" value="1"/>
</dbReference>
<dbReference type="Gene3D" id="3.40.50.300">
    <property type="entry name" value="P-loop containing nucleotide triphosphate hydrolases"/>
    <property type="match status" value="1"/>
</dbReference>
<dbReference type="HAMAP" id="MF_00377">
    <property type="entry name" value="DnaA_bact"/>
    <property type="match status" value="1"/>
</dbReference>
<dbReference type="InterPro" id="IPR003593">
    <property type="entry name" value="AAA+_ATPase"/>
</dbReference>
<dbReference type="InterPro" id="IPR001957">
    <property type="entry name" value="Chromosome_initiator_DnaA"/>
</dbReference>
<dbReference type="InterPro" id="IPR020591">
    <property type="entry name" value="Chromosome_initiator_DnaA-like"/>
</dbReference>
<dbReference type="InterPro" id="IPR018312">
    <property type="entry name" value="Chromosome_initiator_DnaA_CS"/>
</dbReference>
<dbReference type="InterPro" id="IPR013159">
    <property type="entry name" value="DnaA_C"/>
</dbReference>
<dbReference type="InterPro" id="IPR013317">
    <property type="entry name" value="DnaA_dom"/>
</dbReference>
<dbReference type="InterPro" id="IPR024633">
    <property type="entry name" value="DnaA_N_dom"/>
</dbReference>
<dbReference type="InterPro" id="IPR038454">
    <property type="entry name" value="DnaA_N_sf"/>
</dbReference>
<dbReference type="InterPro" id="IPR027417">
    <property type="entry name" value="P-loop_NTPase"/>
</dbReference>
<dbReference type="InterPro" id="IPR010921">
    <property type="entry name" value="Trp_repressor/repl_initiator"/>
</dbReference>
<dbReference type="NCBIfam" id="TIGR00362">
    <property type="entry name" value="DnaA"/>
    <property type="match status" value="1"/>
</dbReference>
<dbReference type="PANTHER" id="PTHR30050">
    <property type="entry name" value="CHROMOSOMAL REPLICATION INITIATOR PROTEIN DNAA"/>
    <property type="match status" value="1"/>
</dbReference>
<dbReference type="PANTHER" id="PTHR30050:SF2">
    <property type="entry name" value="CHROMOSOMAL REPLICATION INITIATOR PROTEIN DNAA"/>
    <property type="match status" value="1"/>
</dbReference>
<dbReference type="Pfam" id="PF00308">
    <property type="entry name" value="Bac_DnaA"/>
    <property type="match status" value="1"/>
</dbReference>
<dbReference type="Pfam" id="PF08299">
    <property type="entry name" value="Bac_DnaA_C"/>
    <property type="match status" value="1"/>
</dbReference>
<dbReference type="Pfam" id="PF11638">
    <property type="entry name" value="DnaA_N"/>
    <property type="match status" value="1"/>
</dbReference>
<dbReference type="PRINTS" id="PR00051">
    <property type="entry name" value="DNAA"/>
</dbReference>
<dbReference type="SMART" id="SM00382">
    <property type="entry name" value="AAA"/>
    <property type="match status" value="1"/>
</dbReference>
<dbReference type="SMART" id="SM00760">
    <property type="entry name" value="Bac_DnaA_C"/>
    <property type="match status" value="1"/>
</dbReference>
<dbReference type="SUPFAM" id="SSF52540">
    <property type="entry name" value="P-loop containing nucleoside triphosphate hydrolases"/>
    <property type="match status" value="1"/>
</dbReference>
<dbReference type="SUPFAM" id="SSF48295">
    <property type="entry name" value="TrpR-like"/>
    <property type="match status" value="1"/>
</dbReference>
<dbReference type="PROSITE" id="PS01008">
    <property type="entry name" value="DNAA"/>
    <property type="match status" value="1"/>
</dbReference>